<feature type="chain" id="PRO_0000148023" description="5-formaminoimidazole-4-carboxamide-1-(beta)-D-ribofuranosyl 5'-monophosphate synthetase">
    <location>
        <begin position="1"/>
        <end position="359"/>
    </location>
</feature>
<feature type="domain" description="ATP-grasp" evidence="2">
    <location>
        <begin position="115"/>
        <end position="346"/>
    </location>
</feature>
<feature type="binding site" evidence="2">
    <location>
        <position position="28"/>
    </location>
    <ligand>
        <name>5-amino-1-(5-phospho-beta-D-ribosyl)imidazole-4-carboxamide</name>
        <dbReference type="ChEBI" id="CHEBI:58475"/>
    </ligand>
</feature>
<feature type="binding site" evidence="2">
    <location>
        <position position="95"/>
    </location>
    <ligand>
        <name>5-amino-1-(5-phospho-beta-D-ribosyl)imidazole-4-carboxamide</name>
        <dbReference type="ChEBI" id="CHEBI:58475"/>
    </ligand>
</feature>
<feature type="binding site" evidence="2">
    <location>
        <begin position="144"/>
        <end position="206"/>
    </location>
    <ligand>
        <name>ATP</name>
        <dbReference type="ChEBI" id="CHEBI:30616"/>
    </ligand>
</feature>
<feature type="binding site" evidence="2">
    <location>
        <position position="228"/>
    </location>
    <ligand>
        <name>ATP</name>
        <dbReference type="ChEBI" id="CHEBI:30616"/>
    </ligand>
</feature>
<feature type="binding site" evidence="2">
    <location>
        <position position="256"/>
    </location>
    <ligand>
        <name>5-amino-1-(5-phospho-beta-D-ribosyl)imidazole-4-carboxamide</name>
        <dbReference type="ChEBI" id="CHEBI:58475"/>
    </ligand>
</feature>
<feature type="binding site" evidence="2">
    <location>
        <position position="295"/>
    </location>
    <ligand>
        <name>Mg(2+)</name>
        <dbReference type="ChEBI" id="CHEBI:18420"/>
    </ligand>
</feature>
<feature type="binding site" evidence="2">
    <location>
        <position position="308"/>
    </location>
    <ligand>
        <name>Mg(2+)</name>
        <dbReference type="ChEBI" id="CHEBI:18420"/>
    </ligand>
</feature>
<evidence type="ECO:0000250" key="1"/>
<evidence type="ECO:0000255" key="2">
    <source>
        <dbReference type="HAMAP-Rule" id="MF_01163"/>
    </source>
</evidence>
<name>PURP_ARCFU</name>
<reference key="1">
    <citation type="journal article" date="1997" name="Nature">
        <title>The complete genome sequence of the hyperthermophilic, sulphate-reducing archaeon Archaeoglobus fulgidus.</title>
        <authorList>
            <person name="Klenk H.-P."/>
            <person name="Clayton R.A."/>
            <person name="Tomb J.-F."/>
            <person name="White O."/>
            <person name="Nelson K.E."/>
            <person name="Ketchum K.A."/>
            <person name="Dodson R.J."/>
            <person name="Gwinn M.L."/>
            <person name="Hickey E.K."/>
            <person name="Peterson J.D."/>
            <person name="Richardson D.L."/>
            <person name="Kerlavage A.R."/>
            <person name="Graham D.E."/>
            <person name="Kyrpides N.C."/>
            <person name="Fleischmann R.D."/>
            <person name="Quackenbush J."/>
            <person name="Lee N.H."/>
            <person name="Sutton G.G."/>
            <person name="Gill S.R."/>
            <person name="Kirkness E.F."/>
            <person name="Dougherty B.A."/>
            <person name="McKenney K."/>
            <person name="Adams M.D."/>
            <person name="Loftus B.J."/>
            <person name="Peterson S.N."/>
            <person name="Reich C.I."/>
            <person name="McNeil L.K."/>
            <person name="Badger J.H."/>
            <person name="Glodek A."/>
            <person name="Zhou L."/>
            <person name="Overbeek R."/>
            <person name="Gocayne J.D."/>
            <person name="Weidman J.F."/>
            <person name="McDonald L.A."/>
            <person name="Utterback T.R."/>
            <person name="Cotton M.D."/>
            <person name="Spriggs T."/>
            <person name="Artiach P."/>
            <person name="Kaine B.P."/>
            <person name="Sykes S.M."/>
            <person name="Sadow P.W."/>
            <person name="D'Andrea K.P."/>
            <person name="Bowman C."/>
            <person name="Fujii C."/>
            <person name="Garland S.A."/>
            <person name="Mason T.M."/>
            <person name="Olsen G.J."/>
            <person name="Fraser C.M."/>
            <person name="Smith H.O."/>
            <person name="Woese C.R."/>
            <person name="Venter J.C."/>
        </authorList>
    </citation>
    <scope>NUCLEOTIDE SEQUENCE [LARGE SCALE GENOMIC DNA]</scope>
    <source>
        <strain>ATCC 49558 / DSM 4304 / JCM 9628 / NBRC 100126 / VC-16</strain>
    </source>
</reference>
<sequence length="359" mass="40560">MGAMRDKILSVLEDYDKANIHIGTIGSHSALNILKGAKDEGFSTVCICREREKKVYESFGVADKFVIVSDYSDLLDENIQEELRHLNTILIPHGSFNAYIGKFDSLLLPMFGNRELMIWETDRDRQREWLERSGVRMPKKYSRPEEIEGLAIVKYPGAKGGKGYFIVSSPEEFYEISDEMVKKGLIGEEDIKNAEIQEYILGANIYFSFFYSPVYGRVELIAVDRRYESTADALGKVPAKEQIRANINPTYTVIGNFPVVLRESLLVQAFEAAEGIVEVSKEIAYPGMVGAFCIESIFDENALMYVFEISARIVAGTNVGIPTSPYSYILFGENMYMGRRIAREIKLAAEKDMLGELIY</sequence>
<accession>O30123</accession>
<keyword id="KW-0067">ATP-binding</keyword>
<keyword id="KW-0436">Ligase</keyword>
<keyword id="KW-0460">Magnesium</keyword>
<keyword id="KW-0464">Manganese</keyword>
<keyword id="KW-0479">Metal-binding</keyword>
<keyword id="KW-0547">Nucleotide-binding</keyword>
<keyword id="KW-0658">Purine biosynthesis</keyword>
<keyword id="KW-1185">Reference proteome</keyword>
<protein>
    <recommendedName>
        <fullName evidence="2">5-formaminoimidazole-4-carboxamide-1-(beta)-D-ribofuranosyl 5'-monophosphate synthetase</fullName>
        <ecNumber evidence="2">6.3.4.23</ecNumber>
    </recommendedName>
    <alternativeName>
        <fullName evidence="2">5-aminoimidazole-4-carboxamide-1-beta-D-ribofuranosyl 5'-monophosphate--formate ligase</fullName>
    </alternativeName>
</protein>
<dbReference type="EC" id="6.3.4.23" evidence="2"/>
<dbReference type="EMBL" id="AE000782">
    <property type="protein sequence ID" value="AAB91114.1"/>
    <property type="molecule type" value="Genomic_DNA"/>
</dbReference>
<dbReference type="PIR" id="A69264">
    <property type="entry name" value="A69264"/>
</dbReference>
<dbReference type="SMR" id="O30123"/>
<dbReference type="STRING" id="224325.AF_0113"/>
<dbReference type="PaxDb" id="224325-AF_0113"/>
<dbReference type="EnsemblBacteria" id="AAB91114">
    <property type="protein sequence ID" value="AAB91114"/>
    <property type="gene ID" value="AF_0113"/>
</dbReference>
<dbReference type="KEGG" id="afu:AF_0113"/>
<dbReference type="eggNOG" id="arCOG04346">
    <property type="taxonomic scope" value="Archaea"/>
</dbReference>
<dbReference type="HOGENOM" id="CLU_065084_0_0_2"/>
<dbReference type="OrthoDB" id="98133at2157"/>
<dbReference type="PhylomeDB" id="O30123"/>
<dbReference type="UniPathway" id="UPA00074">
    <property type="reaction ID" value="UER00134"/>
</dbReference>
<dbReference type="Proteomes" id="UP000002199">
    <property type="component" value="Chromosome"/>
</dbReference>
<dbReference type="GO" id="GO:0005524">
    <property type="term" value="F:ATP binding"/>
    <property type="evidence" value="ECO:0007669"/>
    <property type="project" value="UniProtKB-KW"/>
</dbReference>
<dbReference type="GO" id="GO:0016879">
    <property type="term" value="F:ligase activity, forming carbon-nitrogen bonds"/>
    <property type="evidence" value="ECO:0007669"/>
    <property type="project" value="UniProtKB-UniRule"/>
</dbReference>
<dbReference type="GO" id="GO:0000287">
    <property type="term" value="F:magnesium ion binding"/>
    <property type="evidence" value="ECO:0007669"/>
    <property type="project" value="InterPro"/>
</dbReference>
<dbReference type="GO" id="GO:0006189">
    <property type="term" value="P:'de novo' IMP biosynthetic process"/>
    <property type="evidence" value="ECO:0007669"/>
    <property type="project" value="UniProtKB-UniRule"/>
</dbReference>
<dbReference type="Gene3D" id="3.40.50.20">
    <property type="match status" value="1"/>
</dbReference>
<dbReference type="Gene3D" id="3.30.1490.20">
    <property type="entry name" value="ATP-grasp fold, A domain"/>
    <property type="match status" value="1"/>
</dbReference>
<dbReference type="Gene3D" id="3.30.470.20">
    <property type="entry name" value="ATP-grasp fold, B domain"/>
    <property type="match status" value="1"/>
</dbReference>
<dbReference type="HAMAP" id="MF_01163">
    <property type="entry name" value="IMP_biosynth_PurP"/>
    <property type="match status" value="1"/>
</dbReference>
<dbReference type="InterPro" id="IPR013815">
    <property type="entry name" value="ATP_grasp_subdomain_1"/>
</dbReference>
<dbReference type="InterPro" id="IPR023656">
    <property type="entry name" value="IMP_biosynth_PurP"/>
</dbReference>
<dbReference type="InterPro" id="IPR009720">
    <property type="entry name" value="IMP_biosynth_PurP_C"/>
</dbReference>
<dbReference type="InterPro" id="IPR010672">
    <property type="entry name" value="IMP_biosynth_PurP_N"/>
</dbReference>
<dbReference type="InterPro" id="IPR016185">
    <property type="entry name" value="PreATP-grasp_dom_sf"/>
</dbReference>
<dbReference type="NCBIfam" id="NF009783">
    <property type="entry name" value="PRK13278.2-4"/>
    <property type="match status" value="1"/>
</dbReference>
<dbReference type="PANTHER" id="PTHR38147:SF2">
    <property type="entry name" value="5-FORMAMINOIMIDAZOLE-4-CARBOXAMIDE-1-(BETA)-D-RIBOFURANOSYL 5'-MONOPHOSPHATE SYNTHETASE"/>
    <property type="match status" value="1"/>
</dbReference>
<dbReference type="PANTHER" id="PTHR38147">
    <property type="entry name" value="5-FORMAMINOIMIDAZOLE-4-CARBOXAMIDE-1-(BETA)-D-RIBOFURANOSYL 5'-MONOPHOSPHATE SYNTHETASE-RELATED"/>
    <property type="match status" value="1"/>
</dbReference>
<dbReference type="Pfam" id="PF06849">
    <property type="entry name" value="DUF1246"/>
    <property type="match status" value="1"/>
</dbReference>
<dbReference type="Pfam" id="PF06973">
    <property type="entry name" value="DUF1297"/>
    <property type="match status" value="1"/>
</dbReference>
<dbReference type="PIRSF" id="PIRSF004602">
    <property type="entry name" value="ATPgrasp_PurP"/>
    <property type="match status" value="1"/>
</dbReference>
<dbReference type="SUPFAM" id="SSF56059">
    <property type="entry name" value="Glutathione synthetase ATP-binding domain-like"/>
    <property type="match status" value="1"/>
</dbReference>
<dbReference type="SUPFAM" id="SSF52440">
    <property type="entry name" value="PreATP-grasp domain"/>
    <property type="match status" value="1"/>
</dbReference>
<organism>
    <name type="scientific">Archaeoglobus fulgidus (strain ATCC 49558 / DSM 4304 / JCM 9628 / NBRC 100126 / VC-16)</name>
    <dbReference type="NCBI Taxonomy" id="224325"/>
    <lineage>
        <taxon>Archaea</taxon>
        <taxon>Methanobacteriati</taxon>
        <taxon>Methanobacteriota</taxon>
        <taxon>Archaeoglobi</taxon>
        <taxon>Archaeoglobales</taxon>
        <taxon>Archaeoglobaceae</taxon>
        <taxon>Archaeoglobus</taxon>
    </lineage>
</organism>
<comment type="function">
    <text evidence="2">Catalyzes the ATP- and formate-dependent formylation of 5-aminoimidazole-4-carboxamide-1-beta-d-ribofuranosyl 5'-monophosphate (AICAR) to 5-formaminoimidazole-4-carboxamide-1-beta-d-ribofuranosyl 5'-monophosphate (FAICAR) in the absence of folates.</text>
</comment>
<comment type="catalytic activity">
    <reaction evidence="2">
        <text>5-amino-1-(5-phospho-beta-D-ribosyl)imidazole-4-carboxamide + formate + ATP = 5-formamido-1-(5-phospho-D-ribosyl)imidazole-4-carboxamide + ADP + phosphate</text>
        <dbReference type="Rhea" id="RHEA:24836"/>
        <dbReference type="ChEBI" id="CHEBI:15740"/>
        <dbReference type="ChEBI" id="CHEBI:30616"/>
        <dbReference type="ChEBI" id="CHEBI:43474"/>
        <dbReference type="ChEBI" id="CHEBI:58467"/>
        <dbReference type="ChEBI" id="CHEBI:58475"/>
        <dbReference type="ChEBI" id="CHEBI:456216"/>
        <dbReference type="EC" id="6.3.4.23"/>
    </reaction>
</comment>
<comment type="cofactor">
    <cofactor evidence="1">
        <name>Mg(2+)</name>
        <dbReference type="ChEBI" id="CHEBI:18420"/>
    </cofactor>
    <cofactor evidence="1">
        <name>Mn(2+)</name>
        <dbReference type="ChEBI" id="CHEBI:29035"/>
    </cofactor>
    <text evidence="1">Binds 1 Mg(2+) or Mn(2+) ion per subunit.</text>
</comment>
<comment type="pathway">
    <text evidence="2">Purine metabolism; IMP biosynthesis via de novo pathway; 5-formamido-1-(5-phospho-D-ribosyl)imidazole-4-carboxamide from 5-amino-1-(5-phospho-D-ribosyl)imidazole-4-carboxamide (formate route): step 1/1.</text>
</comment>
<comment type="similarity">
    <text evidence="2">Belongs to the phosphohexose mutase family.</text>
</comment>
<gene>
    <name evidence="2" type="primary">purP</name>
    <name type="ordered locus">AF_0113</name>
</gene>
<proteinExistence type="inferred from homology"/>